<accession>A5ESP9</accession>
<sequence>MTDATTISPLDQARILSEALPHMQEYDDETIVIKYGGHAMGDEDTAKAFARDIVLLEQTAINPVVVHGGGPQIATMLKRLGIVSEFAAGLRITDAATIEIVEMVLAGSINKQLVGYINEAGGKAVGLCGKDGNMVRAVKATRTMVDPDSHIEKVVDLGFVGEPDKVDLTLLNQLIGYELIPILAPLATSKEGQTFNVNADTFAGAVAGALKAKRLLLLTDVPGVLDKSKKLIPELSVKDARKLIADGTISGGMIPKVETCIYALEQGVQGVVILDGKVQHAVLLELFTNQGTGTLIHK</sequence>
<evidence type="ECO:0000255" key="1">
    <source>
        <dbReference type="HAMAP-Rule" id="MF_00082"/>
    </source>
</evidence>
<protein>
    <recommendedName>
        <fullName evidence="1">Acetylglutamate kinase</fullName>
        <ecNumber evidence="1">2.7.2.8</ecNumber>
    </recommendedName>
    <alternativeName>
        <fullName evidence="1">N-acetyl-L-glutamate 5-phosphotransferase</fullName>
    </alternativeName>
    <alternativeName>
        <fullName evidence="1">NAG kinase</fullName>
        <shortName evidence="1">NAGK</shortName>
    </alternativeName>
</protein>
<reference key="1">
    <citation type="journal article" date="2007" name="Science">
        <title>Legumes symbioses: absence of nod genes in photosynthetic bradyrhizobia.</title>
        <authorList>
            <person name="Giraud E."/>
            <person name="Moulin L."/>
            <person name="Vallenet D."/>
            <person name="Barbe V."/>
            <person name="Cytryn E."/>
            <person name="Avarre J.-C."/>
            <person name="Jaubert M."/>
            <person name="Simon D."/>
            <person name="Cartieaux F."/>
            <person name="Prin Y."/>
            <person name="Bena G."/>
            <person name="Hannibal L."/>
            <person name="Fardoux J."/>
            <person name="Kojadinovic M."/>
            <person name="Vuillet L."/>
            <person name="Lajus A."/>
            <person name="Cruveiller S."/>
            <person name="Rouy Z."/>
            <person name="Mangenot S."/>
            <person name="Segurens B."/>
            <person name="Dossat C."/>
            <person name="Franck W.L."/>
            <person name="Chang W.-S."/>
            <person name="Saunders E."/>
            <person name="Bruce D."/>
            <person name="Richardson P."/>
            <person name="Normand P."/>
            <person name="Dreyfus B."/>
            <person name="Pignol D."/>
            <person name="Stacey G."/>
            <person name="Emerich D."/>
            <person name="Vermeglio A."/>
            <person name="Medigue C."/>
            <person name="Sadowsky M."/>
        </authorList>
    </citation>
    <scope>NUCLEOTIDE SEQUENCE [LARGE SCALE GENOMIC DNA]</scope>
    <source>
        <strain>BTAi1 / ATCC BAA-1182</strain>
    </source>
</reference>
<keyword id="KW-0028">Amino-acid biosynthesis</keyword>
<keyword id="KW-0055">Arginine biosynthesis</keyword>
<keyword id="KW-0067">ATP-binding</keyword>
<keyword id="KW-0963">Cytoplasm</keyword>
<keyword id="KW-0418">Kinase</keyword>
<keyword id="KW-0547">Nucleotide-binding</keyword>
<keyword id="KW-1185">Reference proteome</keyword>
<keyword id="KW-0808">Transferase</keyword>
<name>ARGB_BRASB</name>
<organism>
    <name type="scientific">Bradyrhizobium sp. (strain BTAi1 / ATCC BAA-1182)</name>
    <dbReference type="NCBI Taxonomy" id="288000"/>
    <lineage>
        <taxon>Bacteria</taxon>
        <taxon>Pseudomonadati</taxon>
        <taxon>Pseudomonadota</taxon>
        <taxon>Alphaproteobacteria</taxon>
        <taxon>Hyphomicrobiales</taxon>
        <taxon>Nitrobacteraceae</taxon>
        <taxon>Bradyrhizobium</taxon>
    </lineage>
</organism>
<feature type="chain" id="PRO_1000010486" description="Acetylglutamate kinase">
    <location>
        <begin position="1"/>
        <end position="298"/>
    </location>
</feature>
<feature type="binding site" evidence="1">
    <location>
        <begin position="69"/>
        <end position="70"/>
    </location>
    <ligand>
        <name>substrate</name>
    </ligand>
</feature>
<feature type="binding site" evidence="1">
    <location>
        <position position="91"/>
    </location>
    <ligand>
        <name>substrate</name>
    </ligand>
</feature>
<feature type="binding site" evidence="1">
    <location>
        <position position="196"/>
    </location>
    <ligand>
        <name>substrate</name>
    </ligand>
</feature>
<feature type="site" description="Transition state stabilizer" evidence="1">
    <location>
        <position position="34"/>
    </location>
</feature>
<feature type="site" description="Transition state stabilizer" evidence="1">
    <location>
        <position position="256"/>
    </location>
</feature>
<dbReference type="EC" id="2.7.2.8" evidence="1"/>
<dbReference type="EMBL" id="CP000494">
    <property type="protein sequence ID" value="ABQ39193.1"/>
    <property type="molecule type" value="Genomic_DNA"/>
</dbReference>
<dbReference type="RefSeq" id="WP_012047096.1">
    <property type="nucleotide sequence ID" value="NC_009485.1"/>
</dbReference>
<dbReference type="SMR" id="A5ESP9"/>
<dbReference type="STRING" id="288000.BBta_7329"/>
<dbReference type="KEGG" id="bbt:BBta_7329"/>
<dbReference type="eggNOG" id="COG0548">
    <property type="taxonomic scope" value="Bacteria"/>
</dbReference>
<dbReference type="HOGENOM" id="CLU_053680_0_0_5"/>
<dbReference type="OrthoDB" id="9803155at2"/>
<dbReference type="UniPathway" id="UPA00068">
    <property type="reaction ID" value="UER00107"/>
</dbReference>
<dbReference type="Proteomes" id="UP000000246">
    <property type="component" value="Chromosome"/>
</dbReference>
<dbReference type="GO" id="GO:0005737">
    <property type="term" value="C:cytoplasm"/>
    <property type="evidence" value="ECO:0007669"/>
    <property type="project" value="UniProtKB-SubCell"/>
</dbReference>
<dbReference type="GO" id="GO:0003991">
    <property type="term" value="F:acetylglutamate kinase activity"/>
    <property type="evidence" value="ECO:0007669"/>
    <property type="project" value="UniProtKB-UniRule"/>
</dbReference>
<dbReference type="GO" id="GO:0005524">
    <property type="term" value="F:ATP binding"/>
    <property type="evidence" value="ECO:0007669"/>
    <property type="project" value="UniProtKB-UniRule"/>
</dbReference>
<dbReference type="GO" id="GO:0042450">
    <property type="term" value="P:arginine biosynthetic process via ornithine"/>
    <property type="evidence" value="ECO:0007669"/>
    <property type="project" value="UniProtKB-UniRule"/>
</dbReference>
<dbReference type="GO" id="GO:0006526">
    <property type="term" value="P:L-arginine biosynthetic process"/>
    <property type="evidence" value="ECO:0007669"/>
    <property type="project" value="UniProtKB-UniPathway"/>
</dbReference>
<dbReference type="CDD" id="cd04250">
    <property type="entry name" value="AAK_NAGK-C"/>
    <property type="match status" value="1"/>
</dbReference>
<dbReference type="FunFam" id="3.40.1160.10:FF:000004">
    <property type="entry name" value="Acetylglutamate kinase"/>
    <property type="match status" value="1"/>
</dbReference>
<dbReference type="Gene3D" id="3.40.1160.10">
    <property type="entry name" value="Acetylglutamate kinase-like"/>
    <property type="match status" value="1"/>
</dbReference>
<dbReference type="HAMAP" id="MF_00082">
    <property type="entry name" value="ArgB"/>
    <property type="match status" value="1"/>
</dbReference>
<dbReference type="InterPro" id="IPR036393">
    <property type="entry name" value="AceGlu_kinase-like_sf"/>
</dbReference>
<dbReference type="InterPro" id="IPR004662">
    <property type="entry name" value="AcgluKinase_fam"/>
</dbReference>
<dbReference type="InterPro" id="IPR037528">
    <property type="entry name" value="ArgB"/>
</dbReference>
<dbReference type="InterPro" id="IPR001048">
    <property type="entry name" value="Asp/Glu/Uridylate_kinase"/>
</dbReference>
<dbReference type="InterPro" id="IPR041727">
    <property type="entry name" value="NAGK-C"/>
</dbReference>
<dbReference type="NCBIfam" id="TIGR00761">
    <property type="entry name" value="argB"/>
    <property type="match status" value="1"/>
</dbReference>
<dbReference type="PANTHER" id="PTHR23342">
    <property type="entry name" value="N-ACETYLGLUTAMATE SYNTHASE"/>
    <property type="match status" value="1"/>
</dbReference>
<dbReference type="PANTHER" id="PTHR23342:SF0">
    <property type="entry name" value="N-ACETYLGLUTAMATE SYNTHASE, MITOCHONDRIAL"/>
    <property type="match status" value="1"/>
</dbReference>
<dbReference type="Pfam" id="PF00696">
    <property type="entry name" value="AA_kinase"/>
    <property type="match status" value="1"/>
</dbReference>
<dbReference type="PIRSF" id="PIRSF000728">
    <property type="entry name" value="NAGK"/>
    <property type="match status" value="1"/>
</dbReference>
<dbReference type="SUPFAM" id="SSF53633">
    <property type="entry name" value="Carbamate kinase-like"/>
    <property type="match status" value="1"/>
</dbReference>
<proteinExistence type="inferred from homology"/>
<comment type="function">
    <text evidence="1">Catalyzes the ATP-dependent phosphorylation of N-acetyl-L-glutamate.</text>
</comment>
<comment type="catalytic activity">
    <reaction evidence="1">
        <text>N-acetyl-L-glutamate + ATP = N-acetyl-L-glutamyl 5-phosphate + ADP</text>
        <dbReference type="Rhea" id="RHEA:14629"/>
        <dbReference type="ChEBI" id="CHEBI:30616"/>
        <dbReference type="ChEBI" id="CHEBI:44337"/>
        <dbReference type="ChEBI" id="CHEBI:57936"/>
        <dbReference type="ChEBI" id="CHEBI:456216"/>
        <dbReference type="EC" id="2.7.2.8"/>
    </reaction>
</comment>
<comment type="pathway">
    <text evidence="1">Amino-acid biosynthesis; L-arginine biosynthesis; N(2)-acetyl-L-ornithine from L-glutamate: step 2/4.</text>
</comment>
<comment type="subcellular location">
    <subcellularLocation>
        <location evidence="1">Cytoplasm</location>
    </subcellularLocation>
</comment>
<comment type="similarity">
    <text evidence="1">Belongs to the acetylglutamate kinase family. ArgB subfamily.</text>
</comment>
<gene>
    <name evidence="1" type="primary">argB</name>
    <name type="ordered locus">BBta_7329</name>
</gene>